<proteinExistence type="evidence at protein level"/>
<comment type="function">
    <text evidence="1">Has no antimicrobial activity (PubMed:11784303). Inhibits the formation of NO by neuronal nitric oxide synthase (nNOS) at micromolar concentrations (PubMed:11784303). Acts by a non-competitive mechanism, probably by binding to calcium/calmodulin and as a consequence blocking calmodulin attachment to nNOS (PubMed:11784303). In vitro, does not exhibit cytotoxicity towards 60 human tumor lines (PubMed:11784303).</text>
</comment>
<comment type="subcellular location">
    <subcellularLocation>
        <location evidence="1">Secreted</location>
    </subcellularLocation>
</comment>
<comment type="tissue specificity">
    <text evidence="4">Expressed by the skin glands.</text>
</comment>
<comment type="similarity">
    <text evidence="3">Belongs to the frog skin active peptide (FSAP) family.</text>
</comment>
<organism>
    <name type="scientific">Ranoidea lesueuri</name>
    <name type="common">Lesueur's frog</name>
    <name type="synonym">Litoria lesueurii</name>
    <dbReference type="NCBI Taxonomy" id="95134"/>
    <lineage>
        <taxon>Eukaryota</taxon>
        <taxon>Metazoa</taxon>
        <taxon>Chordata</taxon>
        <taxon>Craniata</taxon>
        <taxon>Vertebrata</taxon>
        <taxon>Euteleostomi</taxon>
        <taxon>Amphibia</taxon>
        <taxon>Batrachia</taxon>
        <taxon>Anura</taxon>
        <taxon>Neobatrachia</taxon>
        <taxon>Hyloidea</taxon>
        <taxon>Hylidae</taxon>
        <taxon>Pelodryadinae</taxon>
        <taxon>Litoria</taxon>
    </lineage>
</organism>
<sequence>GLLDILKKVGKVA</sequence>
<keyword id="KW-0027">Amidation</keyword>
<keyword id="KW-0878">Amphibian defense peptide</keyword>
<keyword id="KW-0112">Calmodulin-binding</keyword>
<keyword id="KW-0903">Direct protein sequencing</keyword>
<keyword id="KW-0964">Secreted</keyword>
<name>LES_RANLE</name>
<feature type="peptide" id="PRO_0000450232" description="Lesueurin" evidence="1">
    <location>
        <begin position="1"/>
        <end position="13"/>
    </location>
</feature>
<feature type="modified residue" description="Alanine amide" evidence="1">
    <location>
        <position position="13"/>
    </location>
</feature>
<reference key="1">
    <citation type="journal article" date="2002" name="Eur. J. Biochem.">
        <title>Amphibian peptides that inhibit neuronal nitric oxide synthase. Isolation of lesuerin from the skin secretion of the Australian stony creek frog Litoria lesueuri.</title>
        <authorList>
            <person name="Doyle J."/>
            <person name="Llewellyn L.E."/>
            <person name="Brinkworth C.S."/>
            <person name="Bowie J.H."/>
            <person name="Wegener K.L."/>
            <person name="Rozek T."/>
            <person name="Wabnitz P.A."/>
            <person name="Wallace J.C."/>
            <person name="Tyler M.J."/>
        </authorList>
    </citation>
    <scope>PROTEIN SEQUENCE</scope>
    <scope>FUNCTION</scope>
    <scope>AMIDATION AT ALA-13</scope>
    <scope>SYNTHESIS</scope>
    <source>
        <tissue>Skin secretion</tissue>
    </source>
</reference>
<accession>P0DTV3</accession>
<evidence type="ECO:0000269" key="1">
    <source>
    </source>
</evidence>
<evidence type="ECO:0000303" key="2">
    <source>
    </source>
</evidence>
<evidence type="ECO:0000305" key="3"/>
<evidence type="ECO:0000305" key="4">
    <source>
    </source>
</evidence>
<protein>
    <recommendedName>
        <fullName evidence="2">Lesueurin</fullName>
    </recommendedName>
</protein>
<dbReference type="GO" id="GO:0005576">
    <property type="term" value="C:extracellular region"/>
    <property type="evidence" value="ECO:0007669"/>
    <property type="project" value="UniProtKB-SubCell"/>
</dbReference>
<dbReference type="GO" id="GO:0005516">
    <property type="term" value="F:calmodulin binding"/>
    <property type="evidence" value="ECO:0007669"/>
    <property type="project" value="UniProtKB-KW"/>
</dbReference>
<dbReference type="GO" id="GO:0006952">
    <property type="term" value="P:defense response"/>
    <property type="evidence" value="ECO:0007669"/>
    <property type="project" value="UniProtKB-KW"/>
</dbReference>